<accession>Q67S82</accession>
<protein>
    <recommendedName>
        <fullName evidence="1">Small ribosomal subunit protein bS20</fullName>
    </recommendedName>
    <alternativeName>
        <fullName evidence="2">30S ribosomal protein S20</fullName>
    </alternativeName>
</protein>
<feature type="chain" id="PRO_0000168043" description="Small ribosomal subunit protein bS20">
    <location>
        <begin position="1"/>
        <end position="94"/>
    </location>
</feature>
<dbReference type="EMBL" id="AP006840">
    <property type="protein sequence ID" value="BAD39461.1"/>
    <property type="molecule type" value="Genomic_DNA"/>
</dbReference>
<dbReference type="RefSeq" id="WP_011194610.1">
    <property type="nucleotide sequence ID" value="NC_006177.1"/>
</dbReference>
<dbReference type="SMR" id="Q67S82"/>
<dbReference type="STRING" id="292459.STH476"/>
<dbReference type="KEGG" id="sth:STH476"/>
<dbReference type="eggNOG" id="COG0268">
    <property type="taxonomic scope" value="Bacteria"/>
</dbReference>
<dbReference type="HOGENOM" id="CLU_160655_1_0_9"/>
<dbReference type="OrthoDB" id="9808392at2"/>
<dbReference type="Proteomes" id="UP000000417">
    <property type="component" value="Chromosome"/>
</dbReference>
<dbReference type="GO" id="GO:0005829">
    <property type="term" value="C:cytosol"/>
    <property type="evidence" value="ECO:0007669"/>
    <property type="project" value="TreeGrafter"/>
</dbReference>
<dbReference type="GO" id="GO:0015935">
    <property type="term" value="C:small ribosomal subunit"/>
    <property type="evidence" value="ECO:0007669"/>
    <property type="project" value="TreeGrafter"/>
</dbReference>
<dbReference type="GO" id="GO:0070181">
    <property type="term" value="F:small ribosomal subunit rRNA binding"/>
    <property type="evidence" value="ECO:0007669"/>
    <property type="project" value="TreeGrafter"/>
</dbReference>
<dbReference type="GO" id="GO:0003735">
    <property type="term" value="F:structural constituent of ribosome"/>
    <property type="evidence" value="ECO:0007669"/>
    <property type="project" value="InterPro"/>
</dbReference>
<dbReference type="GO" id="GO:0006412">
    <property type="term" value="P:translation"/>
    <property type="evidence" value="ECO:0007669"/>
    <property type="project" value="UniProtKB-UniRule"/>
</dbReference>
<dbReference type="FunFam" id="1.20.58.110:FF:000001">
    <property type="entry name" value="30S ribosomal protein S20"/>
    <property type="match status" value="1"/>
</dbReference>
<dbReference type="Gene3D" id="1.20.58.110">
    <property type="entry name" value="Ribosomal protein S20"/>
    <property type="match status" value="1"/>
</dbReference>
<dbReference type="HAMAP" id="MF_00500">
    <property type="entry name" value="Ribosomal_bS20"/>
    <property type="match status" value="1"/>
</dbReference>
<dbReference type="InterPro" id="IPR002583">
    <property type="entry name" value="Ribosomal_bS20"/>
</dbReference>
<dbReference type="InterPro" id="IPR036510">
    <property type="entry name" value="Ribosomal_bS20_sf"/>
</dbReference>
<dbReference type="NCBIfam" id="TIGR00029">
    <property type="entry name" value="S20"/>
    <property type="match status" value="1"/>
</dbReference>
<dbReference type="PANTHER" id="PTHR33398">
    <property type="entry name" value="30S RIBOSOMAL PROTEIN S20"/>
    <property type="match status" value="1"/>
</dbReference>
<dbReference type="PANTHER" id="PTHR33398:SF1">
    <property type="entry name" value="SMALL RIBOSOMAL SUBUNIT PROTEIN BS20C"/>
    <property type="match status" value="1"/>
</dbReference>
<dbReference type="Pfam" id="PF01649">
    <property type="entry name" value="Ribosomal_S20p"/>
    <property type="match status" value="1"/>
</dbReference>
<dbReference type="SUPFAM" id="SSF46992">
    <property type="entry name" value="Ribosomal protein S20"/>
    <property type="match status" value="1"/>
</dbReference>
<evidence type="ECO:0000255" key="1">
    <source>
        <dbReference type="HAMAP-Rule" id="MF_00500"/>
    </source>
</evidence>
<evidence type="ECO:0000305" key="2"/>
<keyword id="KW-1185">Reference proteome</keyword>
<keyword id="KW-0687">Ribonucleoprotein</keyword>
<keyword id="KW-0689">Ribosomal protein</keyword>
<keyword id="KW-0694">RNA-binding</keyword>
<keyword id="KW-0699">rRNA-binding</keyword>
<comment type="function">
    <text evidence="1">Binds directly to 16S ribosomal RNA.</text>
</comment>
<comment type="similarity">
    <text evidence="1">Belongs to the bacterial ribosomal protein bS20 family.</text>
</comment>
<reference key="1">
    <citation type="journal article" date="2004" name="Nucleic Acids Res.">
        <title>Genome sequence of Symbiobacterium thermophilum, an uncultivable bacterium that depends on microbial commensalism.</title>
        <authorList>
            <person name="Ueda K."/>
            <person name="Yamashita A."/>
            <person name="Ishikawa J."/>
            <person name="Shimada M."/>
            <person name="Watsuji T."/>
            <person name="Morimura K."/>
            <person name="Ikeda H."/>
            <person name="Hattori M."/>
            <person name="Beppu T."/>
        </authorList>
    </citation>
    <scope>NUCLEOTIDE SEQUENCE [LARGE SCALE GENOMIC DNA]</scope>
    <source>
        <strain>DSM 24528 / JCM 14929 / IAM 14863 / T</strain>
    </source>
</reference>
<gene>
    <name evidence="1" type="primary">rpsT</name>
    <name type="ordered locus">STH476</name>
</gene>
<proteinExistence type="inferred from homology"/>
<organism>
    <name type="scientific">Symbiobacterium thermophilum (strain DSM 24528 / JCM 14929 / IAM 14863 / T)</name>
    <dbReference type="NCBI Taxonomy" id="292459"/>
    <lineage>
        <taxon>Bacteria</taxon>
        <taxon>Bacillati</taxon>
        <taxon>Bacillota</taxon>
        <taxon>Clostridia</taxon>
        <taxon>Eubacteriales</taxon>
        <taxon>Symbiobacteriaceae</taxon>
        <taxon>Symbiobacterium</taxon>
    </lineage>
</organism>
<name>RS20_SYMTH</name>
<sequence>MANTRSAKKRALVAAKRTARNKMVKSSLRTAIRKFREALGTENAPILLNRAFSALDRAASKGVIHKNTAARKKARLAKALAKATAAQAVAAANE</sequence>